<evidence type="ECO:0000255" key="1"/>
<evidence type="ECO:0000305" key="2"/>
<reference key="1">
    <citation type="journal article" date="1996" name="Microbiology">
        <title>Systematic sequencing of the 283 kb 210 degrees-232 degrees region of the Bacillus subtilis genome containing the skin element and many sporulation genes.</title>
        <authorList>
            <person name="Mizuno M."/>
            <person name="Masuda S."/>
            <person name="Takemaru K."/>
            <person name="Hosono S."/>
            <person name="Sato T."/>
            <person name="Takeuchi M."/>
            <person name="Kobayashi Y."/>
        </authorList>
    </citation>
    <scope>NUCLEOTIDE SEQUENCE [GENOMIC DNA]</scope>
    <source>
        <strain>168 / JH642</strain>
    </source>
</reference>
<reference key="2">
    <citation type="journal article" date="1997" name="Nature">
        <title>The complete genome sequence of the Gram-positive bacterium Bacillus subtilis.</title>
        <authorList>
            <person name="Kunst F."/>
            <person name="Ogasawara N."/>
            <person name="Moszer I."/>
            <person name="Albertini A.M."/>
            <person name="Alloni G."/>
            <person name="Azevedo V."/>
            <person name="Bertero M.G."/>
            <person name="Bessieres P."/>
            <person name="Bolotin A."/>
            <person name="Borchert S."/>
            <person name="Borriss R."/>
            <person name="Boursier L."/>
            <person name="Brans A."/>
            <person name="Braun M."/>
            <person name="Brignell S.C."/>
            <person name="Bron S."/>
            <person name="Brouillet S."/>
            <person name="Bruschi C.V."/>
            <person name="Caldwell B."/>
            <person name="Capuano V."/>
            <person name="Carter N.M."/>
            <person name="Choi S.-K."/>
            <person name="Codani J.-J."/>
            <person name="Connerton I.F."/>
            <person name="Cummings N.J."/>
            <person name="Daniel R.A."/>
            <person name="Denizot F."/>
            <person name="Devine K.M."/>
            <person name="Duesterhoeft A."/>
            <person name="Ehrlich S.D."/>
            <person name="Emmerson P.T."/>
            <person name="Entian K.-D."/>
            <person name="Errington J."/>
            <person name="Fabret C."/>
            <person name="Ferrari E."/>
            <person name="Foulger D."/>
            <person name="Fritz C."/>
            <person name="Fujita M."/>
            <person name="Fujita Y."/>
            <person name="Fuma S."/>
            <person name="Galizzi A."/>
            <person name="Galleron N."/>
            <person name="Ghim S.-Y."/>
            <person name="Glaser P."/>
            <person name="Goffeau A."/>
            <person name="Golightly E.J."/>
            <person name="Grandi G."/>
            <person name="Guiseppi G."/>
            <person name="Guy B.J."/>
            <person name="Haga K."/>
            <person name="Haiech J."/>
            <person name="Harwood C.R."/>
            <person name="Henaut A."/>
            <person name="Hilbert H."/>
            <person name="Holsappel S."/>
            <person name="Hosono S."/>
            <person name="Hullo M.-F."/>
            <person name="Itaya M."/>
            <person name="Jones L.-M."/>
            <person name="Joris B."/>
            <person name="Karamata D."/>
            <person name="Kasahara Y."/>
            <person name="Klaerr-Blanchard M."/>
            <person name="Klein C."/>
            <person name="Kobayashi Y."/>
            <person name="Koetter P."/>
            <person name="Koningstein G."/>
            <person name="Krogh S."/>
            <person name="Kumano M."/>
            <person name="Kurita K."/>
            <person name="Lapidus A."/>
            <person name="Lardinois S."/>
            <person name="Lauber J."/>
            <person name="Lazarevic V."/>
            <person name="Lee S.-M."/>
            <person name="Levine A."/>
            <person name="Liu H."/>
            <person name="Masuda S."/>
            <person name="Mauel C."/>
            <person name="Medigue C."/>
            <person name="Medina N."/>
            <person name="Mellado R.P."/>
            <person name="Mizuno M."/>
            <person name="Moestl D."/>
            <person name="Nakai S."/>
            <person name="Noback M."/>
            <person name="Noone D."/>
            <person name="O'Reilly M."/>
            <person name="Ogawa K."/>
            <person name="Ogiwara A."/>
            <person name="Oudega B."/>
            <person name="Park S.-H."/>
            <person name="Parro V."/>
            <person name="Pohl T.M."/>
            <person name="Portetelle D."/>
            <person name="Porwollik S."/>
            <person name="Prescott A.M."/>
            <person name="Presecan E."/>
            <person name="Pujic P."/>
            <person name="Purnelle B."/>
            <person name="Rapoport G."/>
            <person name="Rey M."/>
            <person name="Reynolds S."/>
            <person name="Rieger M."/>
            <person name="Rivolta C."/>
            <person name="Rocha E."/>
            <person name="Roche B."/>
            <person name="Rose M."/>
            <person name="Sadaie Y."/>
            <person name="Sato T."/>
            <person name="Scanlan E."/>
            <person name="Schleich S."/>
            <person name="Schroeter R."/>
            <person name="Scoffone F."/>
            <person name="Sekiguchi J."/>
            <person name="Sekowska A."/>
            <person name="Seror S.J."/>
            <person name="Serror P."/>
            <person name="Shin B.-S."/>
            <person name="Soldo B."/>
            <person name="Sorokin A."/>
            <person name="Tacconi E."/>
            <person name="Takagi T."/>
            <person name="Takahashi H."/>
            <person name="Takemaru K."/>
            <person name="Takeuchi M."/>
            <person name="Tamakoshi A."/>
            <person name="Tanaka T."/>
            <person name="Terpstra P."/>
            <person name="Tognoni A."/>
            <person name="Tosato V."/>
            <person name="Uchiyama S."/>
            <person name="Vandenbol M."/>
            <person name="Vannier F."/>
            <person name="Vassarotti A."/>
            <person name="Viari A."/>
            <person name="Wambutt R."/>
            <person name="Wedler E."/>
            <person name="Wedler H."/>
            <person name="Weitzenegger T."/>
            <person name="Winters P."/>
            <person name="Wipat A."/>
            <person name="Yamamoto H."/>
            <person name="Yamane K."/>
            <person name="Yasumoto K."/>
            <person name="Yata K."/>
            <person name="Yoshida K."/>
            <person name="Yoshikawa H.-F."/>
            <person name="Zumstein E."/>
            <person name="Yoshikawa H."/>
            <person name="Danchin A."/>
        </authorList>
    </citation>
    <scope>NUCLEOTIDE SEQUENCE [LARGE SCALE GENOMIC DNA]</scope>
    <source>
        <strain>168</strain>
    </source>
</reference>
<sequence length="57" mass="6257">MLLVVIFGLVALFALWGVLRSVRNKNILGFLLAGATLFVFGWFTVMTVINSGYPTAH</sequence>
<proteinExistence type="predicted"/>
<dbReference type="EMBL" id="D84432">
    <property type="protein sequence ID" value="BAA12526.1"/>
    <property type="molecule type" value="Genomic_DNA"/>
</dbReference>
<dbReference type="EMBL" id="AL009126">
    <property type="protein sequence ID" value="CAB14411.1"/>
    <property type="molecule type" value="Genomic_DNA"/>
</dbReference>
<dbReference type="PIR" id="H69957">
    <property type="entry name" value="H69957"/>
</dbReference>
<dbReference type="RefSeq" id="NP_390360.1">
    <property type="nucleotide sequence ID" value="NC_000964.3"/>
</dbReference>
<dbReference type="RefSeq" id="WP_003230141.1">
    <property type="nucleotide sequence ID" value="NZ_OZ025638.1"/>
</dbReference>
<dbReference type="FunCoup" id="P54500">
    <property type="interactions" value="157"/>
</dbReference>
<dbReference type="STRING" id="224308.BSU24800"/>
<dbReference type="PaxDb" id="224308-BSU24800"/>
<dbReference type="EnsemblBacteria" id="CAB14411">
    <property type="protein sequence ID" value="CAB14411"/>
    <property type="gene ID" value="BSU_24800"/>
</dbReference>
<dbReference type="GeneID" id="938217"/>
<dbReference type="KEGG" id="bsu:BSU24800"/>
<dbReference type="PATRIC" id="fig|224308.179.peg.2699"/>
<dbReference type="eggNOG" id="ENOG50306VH">
    <property type="taxonomic scope" value="Bacteria"/>
</dbReference>
<dbReference type="InParanoid" id="P54500"/>
<dbReference type="OrthoDB" id="2355718at2"/>
<dbReference type="BioCyc" id="BSUB:BSU24800-MONOMER"/>
<dbReference type="Proteomes" id="UP000001570">
    <property type="component" value="Chromosome"/>
</dbReference>
<dbReference type="GO" id="GO:0005886">
    <property type="term" value="C:plasma membrane"/>
    <property type="evidence" value="ECO:0007669"/>
    <property type="project" value="UniProtKB-SubCell"/>
</dbReference>
<dbReference type="InterPro" id="IPR024490">
    <property type="entry name" value="DUF2759"/>
</dbReference>
<dbReference type="Pfam" id="PF10958">
    <property type="entry name" value="DUF2759"/>
    <property type="match status" value="1"/>
</dbReference>
<comment type="subcellular location">
    <subcellularLocation>
        <location evidence="2">Cell membrane</location>
        <topology evidence="2">Multi-pass membrane protein</topology>
    </subcellularLocation>
</comment>
<accession>P54500</accession>
<feature type="chain" id="PRO_0000049815" description="Uncharacterized protein YqgW">
    <location>
        <begin position="1"/>
        <end position="57"/>
    </location>
</feature>
<feature type="transmembrane region" description="Helical" evidence="1">
    <location>
        <begin position="2"/>
        <end position="22"/>
    </location>
</feature>
<feature type="transmembrane region" description="Helical" evidence="1">
    <location>
        <begin position="29"/>
        <end position="49"/>
    </location>
</feature>
<organism>
    <name type="scientific">Bacillus subtilis (strain 168)</name>
    <dbReference type="NCBI Taxonomy" id="224308"/>
    <lineage>
        <taxon>Bacteria</taxon>
        <taxon>Bacillati</taxon>
        <taxon>Bacillota</taxon>
        <taxon>Bacilli</taxon>
        <taxon>Bacillales</taxon>
        <taxon>Bacillaceae</taxon>
        <taxon>Bacillus</taxon>
    </lineage>
</organism>
<protein>
    <recommendedName>
        <fullName>Uncharacterized protein YqgW</fullName>
    </recommendedName>
</protein>
<keyword id="KW-1003">Cell membrane</keyword>
<keyword id="KW-0472">Membrane</keyword>
<keyword id="KW-1185">Reference proteome</keyword>
<keyword id="KW-0812">Transmembrane</keyword>
<keyword id="KW-1133">Transmembrane helix</keyword>
<gene>
    <name type="primary">yqgW</name>
    <name type="ordered locus">BSU24800</name>
</gene>
<name>YQGW_BACSU</name>